<organism>
    <name type="scientific">Shewanella baltica (strain OS223)</name>
    <dbReference type="NCBI Taxonomy" id="407976"/>
    <lineage>
        <taxon>Bacteria</taxon>
        <taxon>Pseudomonadati</taxon>
        <taxon>Pseudomonadota</taxon>
        <taxon>Gammaproteobacteria</taxon>
        <taxon>Alteromonadales</taxon>
        <taxon>Shewanellaceae</taxon>
        <taxon>Shewanella</taxon>
    </lineage>
</organism>
<gene>
    <name evidence="1" type="primary">hypA</name>
    <name type="ordered locus">Sbal223_2415</name>
</gene>
<comment type="function">
    <text evidence="1">Involved in the maturation of [NiFe] hydrogenases. Required for nickel insertion into the metal center of the hydrogenase.</text>
</comment>
<comment type="similarity">
    <text evidence="1">Belongs to the HypA/HybF family.</text>
</comment>
<name>HYPA_SHEB2</name>
<protein>
    <recommendedName>
        <fullName evidence="1">Hydrogenase maturation factor HypA</fullName>
    </recommendedName>
</protein>
<proteinExistence type="inferred from homology"/>
<evidence type="ECO:0000255" key="1">
    <source>
        <dbReference type="HAMAP-Rule" id="MF_00213"/>
    </source>
</evidence>
<dbReference type="EMBL" id="CP001252">
    <property type="protein sequence ID" value="ACK46910.1"/>
    <property type="molecule type" value="Genomic_DNA"/>
</dbReference>
<dbReference type="RefSeq" id="WP_012587817.1">
    <property type="nucleotide sequence ID" value="NC_011663.1"/>
</dbReference>
<dbReference type="SMR" id="B8E7F1"/>
<dbReference type="KEGG" id="sbp:Sbal223_2415"/>
<dbReference type="HOGENOM" id="CLU_126929_6_0_6"/>
<dbReference type="Proteomes" id="UP000002507">
    <property type="component" value="Chromosome"/>
</dbReference>
<dbReference type="GO" id="GO:0016151">
    <property type="term" value="F:nickel cation binding"/>
    <property type="evidence" value="ECO:0007669"/>
    <property type="project" value="UniProtKB-UniRule"/>
</dbReference>
<dbReference type="GO" id="GO:0008270">
    <property type="term" value="F:zinc ion binding"/>
    <property type="evidence" value="ECO:0007669"/>
    <property type="project" value="UniProtKB-UniRule"/>
</dbReference>
<dbReference type="GO" id="GO:0051604">
    <property type="term" value="P:protein maturation"/>
    <property type="evidence" value="ECO:0007669"/>
    <property type="project" value="InterPro"/>
</dbReference>
<dbReference type="GO" id="GO:0036211">
    <property type="term" value="P:protein modification process"/>
    <property type="evidence" value="ECO:0007669"/>
    <property type="project" value="UniProtKB-UniRule"/>
</dbReference>
<dbReference type="Gene3D" id="3.30.2320.80">
    <property type="match status" value="1"/>
</dbReference>
<dbReference type="HAMAP" id="MF_00213">
    <property type="entry name" value="HypA_HybF"/>
    <property type="match status" value="1"/>
</dbReference>
<dbReference type="InterPro" id="IPR000688">
    <property type="entry name" value="HypA/HybF"/>
</dbReference>
<dbReference type="NCBIfam" id="TIGR00100">
    <property type="entry name" value="hypA"/>
    <property type="match status" value="1"/>
</dbReference>
<dbReference type="PANTHER" id="PTHR34535">
    <property type="entry name" value="HYDROGENASE MATURATION FACTOR HYPA"/>
    <property type="match status" value="1"/>
</dbReference>
<dbReference type="PANTHER" id="PTHR34535:SF3">
    <property type="entry name" value="HYDROGENASE MATURATION FACTOR HYPA"/>
    <property type="match status" value="1"/>
</dbReference>
<dbReference type="Pfam" id="PF01155">
    <property type="entry name" value="HypA"/>
    <property type="match status" value="1"/>
</dbReference>
<dbReference type="PIRSF" id="PIRSF004761">
    <property type="entry name" value="Hydrgn_mat_HypA"/>
    <property type="match status" value="1"/>
</dbReference>
<sequence>MHEYSIVSALIEQCEQHALANHAAKITRVDIKLGVMSGVEPSLLQTAFDTFKLDGICNAAQLNIQIQPLVILCQDCQSESVLSERTIVCPACQSYRTRVLDGEDMLLMQLEMEQEED</sequence>
<keyword id="KW-0479">Metal-binding</keyword>
<keyword id="KW-0533">Nickel</keyword>
<keyword id="KW-0862">Zinc</keyword>
<feature type="chain" id="PRO_1000124778" description="Hydrogenase maturation factor HypA">
    <location>
        <begin position="1"/>
        <end position="117"/>
    </location>
</feature>
<feature type="binding site" evidence="1">
    <location>
        <position position="2"/>
    </location>
    <ligand>
        <name>Ni(2+)</name>
        <dbReference type="ChEBI" id="CHEBI:49786"/>
    </ligand>
</feature>
<feature type="binding site" evidence="1">
    <location>
        <position position="73"/>
    </location>
    <ligand>
        <name>Zn(2+)</name>
        <dbReference type="ChEBI" id="CHEBI:29105"/>
    </ligand>
</feature>
<feature type="binding site" evidence="1">
    <location>
        <position position="76"/>
    </location>
    <ligand>
        <name>Zn(2+)</name>
        <dbReference type="ChEBI" id="CHEBI:29105"/>
    </ligand>
</feature>
<feature type="binding site" evidence="1">
    <location>
        <position position="89"/>
    </location>
    <ligand>
        <name>Zn(2+)</name>
        <dbReference type="ChEBI" id="CHEBI:29105"/>
    </ligand>
</feature>
<feature type="binding site" evidence="1">
    <location>
        <position position="92"/>
    </location>
    <ligand>
        <name>Zn(2+)</name>
        <dbReference type="ChEBI" id="CHEBI:29105"/>
    </ligand>
</feature>
<reference key="1">
    <citation type="submission" date="2008-12" db="EMBL/GenBank/DDBJ databases">
        <title>Complete sequence of chromosome of Shewanella baltica OS223.</title>
        <authorList>
            <consortium name="US DOE Joint Genome Institute"/>
            <person name="Lucas S."/>
            <person name="Copeland A."/>
            <person name="Lapidus A."/>
            <person name="Glavina del Rio T."/>
            <person name="Dalin E."/>
            <person name="Tice H."/>
            <person name="Bruce D."/>
            <person name="Goodwin L."/>
            <person name="Pitluck S."/>
            <person name="Chertkov O."/>
            <person name="Meincke L."/>
            <person name="Brettin T."/>
            <person name="Detter J.C."/>
            <person name="Han C."/>
            <person name="Kuske C.R."/>
            <person name="Larimer F."/>
            <person name="Land M."/>
            <person name="Hauser L."/>
            <person name="Kyrpides N."/>
            <person name="Ovchinnikova G."/>
            <person name="Brettar I."/>
            <person name="Rodrigues J."/>
            <person name="Konstantinidis K."/>
            <person name="Tiedje J."/>
        </authorList>
    </citation>
    <scope>NUCLEOTIDE SEQUENCE [LARGE SCALE GENOMIC DNA]</scope>
    <source>
        <strain>OS223</strain>
    </source>
</reference>
<accession>B8E7F1</accession>